<sequence length="153" mass="16084">MAEFIKPYNDDPFVGNLSTPVSTSSFSKGLLGNLPAYRRGLSPLLRGLEIGMAHGYFLIGPFDKLGPLRGTDVALLAGFLSSVGLIIILTTCLSMYGNVSFTRSDSKDPLQTAEGWGQFTAGFLVGAVGGSGFAYLLLANIPVLQTAGLSLFS</sequence>
<name>PSAL_PORPU</name>
<organism>
    <name type="scientific">Porphyra purpurea</name>
    <name type="common">Red seaweed</name>
    <name type="synonym">Ulva purpurea</name>
    <dbReference type="NCBI Taxonomy" id="2787"/>
    <lineage>
        <taxon>Eukaryota</taxon>
        <taxon>Rhodophyta</taxon>
        <taxon>Bangiophyceae</taxon>
        <taxon>Bangiales</taxon>
        <taxon>Bangiaceae</taxon>
        <taxon>Porphyra</taxon>
    </lineage>
</organism>
<gene>
    <name type="primary">psaL</name>
</gene>
<protein>
    <recommendedName>
        <fullName>Photosystem I reaction center subunit XI</fullName>
    </recommendedName>
    <alternativeName>
        <fullName>PSI subunit V</fullName>
    </alternativeName>
    <alternativeName>
        <fullName>PSI-L</fullName>
    </alternativeName>
</protein>
<keyword id="KW-0150">Chloroplast</keyword>
<keyword id="KW-0472">Membrane</keyword>
<keyword id="KW-0602">Photosynthesis</keyword>
<keyword id="KW-0603">Photosystem I</keyword>
<keyword id="KW-0934">Plastid</keyword>
<keyword id="KW-0793">Thylakoid</keyword>
<keyword id="KW-0812">Transmembrane</keyword>
<keyword id="KW-1133">Transmembrane helix</keyword>
<evidence type="ECO:0000250" key="1"/>
<evidence type="ECO:0000255" key="2"/>
<evidence type="ECO:0000305" key="3"/>
<proteinExistence type="inferred from homology"/>
<reference key="1">
    <citation type="journal article" date="1995" name="Plant Mol. Biol. Rep.">
        <title>Complete nucleotide sequence of the Porphyra purpurea chloroplast genome.</title>
        <authorList>
            <person name="Reith M.E."/>
            <person name="Munholland J."/>
        </authorList>
    </citation>
    <scope>NUCLEOTIDE SEQUENCE [LARGE SCALE GENOMIC DNA]</scope>
    <source>
        <strain>Avonport</strain>
    </source>
</reference>
<geneLocation type="chloroplast"/>
<feature type="chain" id="PRO_0000194693" description="Photosystem I reaction center subunit XI">
    <location>
        <begin position="1"/>
        <end position="153"/>
    </location>
</feature>
<feature type="topological domain" description="Stromal" evidence="2">
    <location>
        <begin position="1"/>
        <end position="72"/>
    </location>
</feature>
<feature type="transmembrane region" description="Helical" evidence="2">
    <location>
        <begin position="73"/>
        <end position="93"/>
    </location>
</feature>
<feature type="topological domain" description="Lumenal" evidence="2">
    <location>
        <begin position="94"/>
        <end position="118"/>
    </location>
</feature>
<feature type="transmembrane region" description="Helical" evidence="2">
    <location>
        <begin position="119"/>
        <end position="139"/>
    </location>
</feature>
<feature type="topological domain" description="Stromal" evidence="2">
    <location>
        <begin position="140"/>
        <end position="153"/>
    </location>
</feature>
<comment type="subcellular location">
    <subcellularLocation>
        <location evidence="1">Plastid</location>
        <location evidence="1">Chloroplast thylakoid membrane</location>
        <topology evidence="1">Multi-pass membrane protein</topology>
    </subcellularLocation>
</comment>
<comment type="similarity">
    <text evidence="3">Belongs to the PsaL family.</text>
</comment>
<accession>P51222</accession>
<dbReference type="EMBL" id="U38804">
    <property type="protein sequence ID" value="AAC08108.1"/>
    <property type="molecule type" value="Genomic_DNA"/>
</dbReference>
<dbReference type="PIR" id="S73143">
    <property type="entry name" value="S73143"/>
</dbReference>
<dbReference type="RefSeq" id="NP_053832.1">
    <property type="nucleotide sequence ID" value="NC_000925.1"/>
</dbReference>
<dbReference type="SMR" id="P51222"/>
<dbReference type="GeneID" id="809848"/>
<dbReference type="GO" id="GO:0009535">
    <property type="term" value="C:chloroplast thylakoid membrane"/>
    <property type="evidence" value="ECO:0007669"/>
    <property type="project" value="UniProtKB-SubCell"/>
</dbReference>
<dbReference type="GO" id="GO:0009538">
    <property type="term" value="C:photosystem I reaction center"/>
    <property type="evidence" value="ECO:0007669"/>
    <property type="project" value="InterPro"/>
</dbReference>
<dbReference type="GO" id="GO:0015979">
    <property type="term" value="P:photosynthesis"/>
    <property type="evidence" value="ECO:0007669"/>
    <property type="project" value="UniProtKB-UniRule"/>
</dbReference>
<dbReference type="Gene3D" id="1.20.1240.10">
    <property type="entry name" value="Photosystem I PsaL, reaction centre subunit XI"/>
    <property type="match status" value="1"/>
</dbReference>
<dbReference type="HAMAP" id="MF_00447">
    <property type="entry name" value="PSI_PsaL"/>
    <property type="match status" value="1"/>
</dbReference>
<dbReference type="InterPro" id="IPR003757">
    <property type="entry name" value="PSI_PsaL"/>
</dbReference>
<dbReference type="InterPro" id="IPR036592">
    <property type="entry name" value="PSI_PsaL_sf"/>
</dbReference>
<dbReference type="InterPro" id="IPR022980">
    <property type="entry name" value="PSI_suXI"/>
</dbReference>
<dbReference type="PANTHER" id="PTHR34803">
    <property type="entry name" value="PHOTOSYSTEM I REACTION CENTER SUBUNIT XI, CHLOROPLASTIC"/>
    <property type="match status" value="1"/>
</dbReference>
<dbReference type="PANTHER" id="PTHR34803:SF2">
    <property type="entry name" value="PHOTOSYSTEM I REACTION CENTER SUBUNIT XI, CHLOROPLASTIC"/>
    <property type="match status" value="1"/>
</dbReference>
<dbReference type="Pfam" id="PF02605">
    <property type="entry name" value="PsaL"/>
    <property type="match status" value="1"/>
</dbReference>
<dbReference type="SUPFAM" id="SSF81568">
    <property type="entry name" value="Photosystem I reaction center subunit XI, PsaL"/>
    <property type="match status" value="1"/>
</dbReference>